<keyword id="KW-0119">Carbohydrate metabolism</keyword>
<keyword id="KW-0320">Glycogen biosynthesis</keyword>
<keyword id="KW-0321">Glycogen metabolism</keyword>
<keyword id="KW-0328">Glycosyltransferase</keyword>
<keyword id="KW-0808">Transferase</keyword>
<gene>
    <name evidence="1" type="primary">glgB</name>
    <name type="ordered locus">ECP_3526</name>
</gene>
<accession>Q0TC27</accession>
<dbReference type="EC" id="2.4.1.18" evidence="1"/>
<dbReference type="EMBL" id="CP000247">
    <property type="protein sequence ID" value="ABG71502.1"/>
    <property type="molecule type" value="Genomic_DNA"/>
</dbReference>
<dbReference type="RefSeq" id="WP_001283717.1">
    <property type="nucleotide sequence ID" value="NC_008253.1"/>
</dbReference>
<dbReference type="SMR" id="Q0TC27"/>
<dbReference type="CAZy" id="CBM48">
    <property type="family name" value="Carbohydrate-Binding Module Family 48"/>
</dbReference>
<dbReference type="CAZy" id="GH13">
    <property type="family name" value="Glycoside Hydrolase Family 13"/>
</dbReference>
<dbReference type="KEGG" id="ecp:ECP_3526"/>
<dbReference type="HOGENOM" id="CLU_004245_3_2_6"/>
<dbReference type="UniPathway" id="UPA00164"/>
<dbReference type="Proteomes" id="UP000009182">
    <property type="component" value="Chromosome"/>
</dbReference>
<dbReference type="GO" id="GO:0005829">
    <property type="term" value="C:cytosol"/>
    <property type="evidence" value="ECO:0007669"/>
    <property type="project" value="TreeGrafter"/>
</dbReference>
<dbReference type="GO" id="GO:0003844">
    <property type="term" value="F:1,4-alpha-glucan branching enzyme activity"/>
    <property type="evidence" value="ECO:0007669"/>
    <property type="project" value="UniProtKB-UniRule"/>
</dbReference>
<dbReference type="GO" id="GO:0043169">
    <property type="term" value="F:cation binding"/>
    <property type="evidence" value="ECO:0007669"/>
    <property type="project" value="InterPro"/>
</dbReference>
<dbReference type="GO" id="GO:0004553">
    <property type="term" value="F:hydrolase activity, hydrolyzing O-glycosyl compounds"/>
    <property type="evidence" value="ECO:0007669"/>
    <property type="project" value="InterPro"/>
</dbReference>
<dbReference type="GO" id="GO:0005978">
    <property type="term" value="P:glycogen biosynthetic process"/>
    <property type="evidence" value="ECO:0007669"/>
    <property type="project" value="UniProtKB-UniRule"/>
</dbReference>
<dbReference type="CDD" id="cd11322">
    <property type="entry name" value="AmyAc_Glg_BE"/>
    <property type="match status" value="1"/>
</dbReference>
<dbReference type="CDD" id="cd02855">
    <property type="entry name" value="E_set_GBE_prok_N"/>
    <property type="match status" value="1"/>
</dbReference>
<dbReference type="FunFam" id="2.60.40.10:FF:000169">
    <property type="entry name" value="1,4-alpha-glucan branching enzyme GlgB"/>
    <property type="match status" value="1"/>
</dbReference>
<dbReference type="FunFam" id="2.60.40.10:FF:000331">
    <property type="entry name" value="1,4-alpha-glucan branching enzyme GlgB"/>
    <property type="match status" value="1"/>
</dbReference>
<dbReference type="FunFam" id="2.60.40.1180:FF:000002">
    <property type="entry name" value="1,4-alpha-glucan branching enzyme GlgB"/>
    <property type="match status" value="1"/>
</dbReference>
<dbReference type="FunFam" id="3.20.20.80:FF:000003">
    <property type="entry name" value="1,4-alpha-glucan branching enzyme GlgB"/>
    <property type="match status" value="1"/>
</dbReference>
<dbReference type="Gene3D" id="3.20.20.80">
    <property type="entry name" value="Glycosidases"/>
    <property type="match status" value="1"/>
</dbReference>
<dbReference type="Gene3D" id="2.60.40.1180">
    <property type="entry name" value="Golgi alpha-mannosidase II"/>
    <property type="match status" value="1"/>
</dbReference>
<dbReference type="Gene3D" id="2.60.40.10">
    <property type="entry name" value="Immunoglobulins"/>
    <property type="match status" value="2"/>
</dbReference>
<dbReference type="HAMAP" id="MF_00685">
    <property type="entry name" value="GlgB"/>
    <property type="match status" value="1"/>
</dbReference>
<dbReference type="InterPro" id="IPR006048">
    <property type="entry name" value="A-amylase/branching_C"/>
</dbReference>
<dbReference type="InterPro" id="IPR037439">
    <property type="entry name" value="Branching_enzy"/>
</dbReference>
<dbReference type="InterPro" id="IPR006407">
    <property type="entry name" value="GlgB"/>
</dbReference>
<dbReference type="InterPro" id="IPR054169">
    <property type="entry name" value="GlgB_N"/>
</dbReference>
<dbReference type="InterPro" id="IPR044143">
    <property type="entry name" value="GlgB_N_E_set_prok"/>
</dbReference>
<dbReference type="InterPro" id="IPR006047">
    <property type="entry name" value="Glyco_hydro_13_cat_dom"/>
</dbReference>
<dbReference type="InterPro" id="IPR004193">
    <property type="entry name" value="Glyco_hydro_13_N"/>
</dbReference>
<dbReference type="InterPro" id="IPR013780">
    <property type="entry name" value="Glyco_hydro_b"/>
</dbReference>
<dbReference type="InterPro" id="IPR017853">
    <property type="entry name" value="Glycoside_hydrolase_SF"/>
</dbReference>
<dbReference type="InterPro" id="IPR013783">
    <property type="entry name" value="Ig-like_fold"/>
</dbReference>
<dbReference type="InterPro" id="IPR014756">
    <property type="entry name" value="Ig_E-set"/>
</dbReference>
<dbReference type="NCBIfam" id="TIGR01515">
    <property type="entry name" value="branching_enzym"/>
    <property type="match status" value="1"/>
</dbReference>
<dbReference type="NCBIfam" id="NF003811">
    <property type="entry name" value="PRK05402.1"/>
    <property type="match status" value="1"/>
</dbReference>
<dbReference type="NCBIfam" id="NF008967">
    <property type="entry name" value="PRK12313.1"/>
    <property type="match status" value="1"/>
</dbReference>
<dbReference type="PANTHER" id="PTHR43651">
    <property type="entry name" value="1,4-ALPHA-GLUCAN-BRANCHING ENZYME"/>
    <property type="match status" value="1"/>
</dbReference>
<dbReference type="PANTHER" id="PTHR43651:SF3">
    <property type="entry name" value="1,4-ALPHA-GLUCAN-BRANCHING ENZYME"/>
    <property type="match status" value="1"/>
</dbReference>
<dbReference type="Pfam" id="PF00128">
    <property type="entry name" value="Alpha-amylase"/>
    <property type="match status" value="1"/>
</dbReference>
<dbReference type="Pfam" id="PF02806">
    <property type="entry name" value="Alpha-amylase_C"/>
    <property type="match status" value="1"/>
</dbReference>
<dbReference type="Pfam" id="PF02922">
    <property type="entry name" value="CBM_48"/>
    <property type="match status" value="1"/>
</dbReference>
<dbReference type="Pfam" id="PF22019">
    <property type="entry name" value="GlgB_N"/>
    <property type="match status" value="1"/>
</dbReference>
<dbReference type="PIRSF" id="PIRSF000463">
    <property type="entry name" value="GlgB"/>
    <property type="match status" value="1"/>
</dbReference>
<dbReference type="SMART" id="SM00642">
    <property type="entry name" value="Aamy"/>
    <property type="match status" value="1"/>
</dbReference>
<dbReference type="SUPFAM" id="SSF51445">
    <property type="entry name" value="(Trans)glycosidases"/>
    <property type="match status" value="1"/>
</dbReference>
<dbReference type="SUPFAM" id="SSF81296">
    <property type="entry name" value="E set domains"/>
    <property type="match status" value="2"/>
</dbReference>
<dbReference type="SUPFAM" id="SSF51011">
    <property type="entry name" value="Glycosyl hydrolase domain"/>
    <property type="match status" value="1"/>
</dbReference>
<feature type="chain" id="PRO_0000260654" description="1,4-alpha-glucan branching enzyme GlgB">
    <location>
        <begin position="1"/>
        <end position="728"/>
    </location>
</feature>
<feature type="active site" description="Nucleophile" evidence="1">
    <location>
        <position position="405"/>
    </location>
</feature>
<feature type="active site" description="Proton donor" evidence="1">
    <location>
        <position position="458"/>
    </location>
</feature>
<organism>
    <name type="scientific">Escherichia coli O6:K15:H31 (strain 536 / UPEC)</name>
    <dbReference type="NCBI Taxonomy" id="362663"/>
    <lineage>
        <taxon>Bacteria</taxon>
        <taxon>Pseudomonadati</taxon>
        <taxon>Pseudomonadota</taxon>
        <taxon>Gammaproteobacteria</taxon>
        <taxon>Enterobacterales</taxon>
        <taxon>Enterobacteriaceae</taxon>
        <taxon>Escherichia</taxon>
    </lineage>
</organism>
<reference key="1">
    <citation type="journal article" date="2006" name="Mol. Microbiol.">
        <title>Role of pathogenicity island-associated integrases in the genome plasticity of uropathogenic Escherichia coli strain 536.</title>
        <authorList>
            <person name="Hochhut B."/>
            <person name="Wilde C."/>
            <person name="Balling G."/>
            <person name="Middendorf B."/>
            <person name="Dobrindt U."/>
            <person name="Brzuszkiewicz E."/>
            <person name="Gottschalk G."/>
            <person name="Carniel E."/>
            <person name="Hacker J."/>
        </authorList>
    </citation>
    <scope>NUCLEOTIDE SEQUENCE [LARGE SCALE GENOMIC DNA]</scope>
    <source>
        <strain>536 / UPEC</strain>
    </source>
</reference>
<sequence length="728" mass="84339">MSDRIDRDVINALIAGHFADPFSVLGMHKTTAGLEVRALLPDATDVWVIEPKTGRKLAKLECLDSRGFFSGVIPRRKNFFRYQLAVVWHGQQNLIDDPYRFGPLIQEMDAWLLSEGTHLRPYETLGAHADTMDGVTGTRFSVWAPNARRVSVVGQFNYWDGRRHPMRLRKESGIWELFIPGAHNGQLYKYEMIDANGNLRLKSDPYAFEAQMRPETASLICGLPEKVVQTEERKKANQFDAPISIYEVHLGSWRRHTDNNFWLSYRELADQLVPYAKWMGFTHLELLPINEHPFDGSWGYQPTGLYAPTRRFGTRDDFRYFIDAAHAAGLNVILDWVPGHFPTDDFALAEFDGTNLYEHSDPREGYHQDWNTLIYNYGRREVSNFLVGNALYWIERFGIDALRVDAVASMIYRDYSRKEGEWIPNEFGGRENLEAIEFLRNTNRILGEQVSGAVTMAEESTDFPGVSRPQDMGGLGFWYKWNLGWMHDTLDYMKLDPIYRQYHHDKLTFGMLYNYTENFVLPLSHDEVVHGKKSILDRMPGDAWQKFANLRAYYGWMWAFPGKKLLFMGNEFAQGREWNHDASLDWHLLEGGDNWHHGVQRLVRDLNLTYRHHKAMHELDFDPYGFEWLVVDDKERSVLIFVRRDKEGNEIIVASNFTPVPRHDYRFGINQPGKWREILNTDSMHYHGSNAGNGGAVHSDEIASHGRQHSLSLTLPPLATIWLVREAE</sequence>
<protein>
    <recommendedName>
        <fullName evidence="1">1,4-alpha-glucan branching enzyme GlgB</fullName>
        <ecNumber evidence="1">2.4.1.18</ecNumber>
    </recommendedName>
    <alternativeName>
        <fullName evidence="1">1,4-alpha-D-glucan:1,4-alpha-D-glucan 6-glucosyl-transferase</fullName>
    </alternativeName>
    <alternativeName>
        <fullName evidence="1">Alpha-(1-&gt;4)-glucan branching enzyme</fullName>
    </alternativeName>
    <alternativeName>
        <fullName evidence="1">Glycogen branching enzyme</fullName>
        <shortName evidence="1">BE</shortName>
    </alternativeName>
</protein>
<name>GLGB_ECOL5</name>
<evidence type="ECO:0000255" key="1">
    <source>
        <dbReference type="HAMAP-Rule" id="MF_00685"/>
    </source>
</evidence>
<comment type="function">
    <text evidence="1">Catalyzes the formation of the alpha-1,6-glucosidic linkages in glycogen by scission of a 1,4-alpha-linked oligosaccharide from growing alpha-1,4-glucan chains and the subsequent attachment of the oligosaccharide to the alpha-1,6 position.</text>
</comment>
<comment type="catalytic activity">
    <reaction evidence="1">
        <text>Transfers a segment of a (1-&gt;4)-alpha-D-glucan chain to a primary hydroxy group in a similar glucan chain.</text>
        <dbReference type="EC" id="2.4.1.18"/>
    </reaction>
</comment>
<comment type="pathway">
    <text evidence="1">Glycan biosynthesis; glycogen biosynthesis.</text>
</comment>
<comment type="subunit">
    <text evidence="1">Monomer.</text>
</comment>
<comment type="similarity">
    <text evidence="1">Belongs to the glycosyl hydrolase 13 family. GlgB subfamily.</text>
</comment>
<proteinExistence type="inferred from homology"/>